<gene>
    <name evidence="1" type="primary">hscA</name>
    <name type="ordered locus">PFL_4961</name>
</gene>
<evidence type="ECO:0000255" key="1">
    <source>
        <dbReference type="HAMAP-Rule" id="MF_00679"/>
    </source>
</evidence>
<name>HSCA_PSEF5</name>
<protein>
    <recommendedName>
        <fullName evidence="1">Chaperone protein HscA homolog</fullName>
    </recommendedName>
</protein>
<accession>Q4K6U2</accession>
<dbReference type="EMBL" id="CP000076">
    <property type="protein sequence ID" value="AAY94190.1"/>
    <property type="molecule type" value="Genomic_DNA"/>
</dbReference>
<dbReference type="RefSeq" id="WP_011063214.1">
    <property type="nucleotide sequence ID" value="NC_004129.6"/>
</dbReference>
<dbReference type="SMR" id="Q4K6U2"/>
<dbReference type="STRING" id="220664.PFL_4961"/>
<dbReference type="GeneID" id="57477943"/>
<dbReference type="KEGG" id="pfl:PFL_4961"/>
<dbReference type="PATRIC" id="fig|220664.5.peg.5082"/>
<dbReference type="eggNOG" id="COG0443">
    <property type="taxonomic scope" value="Bacteria"/>
</dbReference>
<dbReference type="HOGENOM" id="CLU_005965_2_3_6"/>
<dbReference type="Proteomes" id="UP000008540">
    <property type="component" value="Chromosome"/>
</dbReference>
<dbReference type="GO" id="GO:0005524">
    <property type="term" value="F:ATP binding"/>
    <property type="evidence" value="ECO:0007669"/>
    <property type="project" value="UniProtKB-KW"/>
</dbReference>
<dbReference type="GO" id="GO:0016887">
    <property type="term" value="F:ATP hydrolysis activity"/>
    <property type="evidence" value="ECO:0007669"/>
    <property type="project" value="UniProtKB-UniRule"/>
</dbReference>
<dbReference type="GO" id="GO:0140662">
    <property type="term" value="F:ATP-dependent protein folding chaperone"/>
    <property type="evidence" value="ECO:0007669"/>
    <property type="project" value="InterPro"/>
</dbReference>
<dbReference type="GO" id="GO:0051082">
    <property type="term" value="F:unfolded protein binding"/>
    <property type="evidence" value="ECO:0007669"/>
    <property type="project" value="InterPro"/>
</dbReference>
<dbReference type="GO" id="GO:0016226">
    <property type="term" value="P:iron-sulfur cluster assembly"/>
    <property type="evidence" value="ECO:0007669"/>
    <property type="project" value="InterPro"/>
</dbReference>
<dbReference type="CDD" id="cd10236">
    <property type="entry name" value="ASKHA_NBD_HSP70_HscA"/>
    <property type="match status" value="1"/>
</dbReference>
<dbReference type="FunFam" id="3.30.420.40:FF:000046">
    <property type="entry name" value="Chaperone protein HscA"/>
    <property type="match status" value="1"/>
</dbReference>
<dbReference type="FunFam" id="2.60.34.10:FF:000005">
    <property type="entry name" value="Chaperone protein HscA homolog"/>
    <property type="match status" value="1"/>
</dbReference>
<dbReference type="Gene3D" id="1.20.1270.10">
    <property type="match status" value="1"/>
</dbReference>
<dbReference type="Gene3D" id="3.30.420.40">
    <property type="match status" value="2"/>
</dbReference>
<dbReference type="Gene3D" id="3.90.640.10">
    <property type="entry name" value="Actin, Chain A, domain 4"/>
    <property type="match status" value="1"/>
</dbReference>
<dbReference type="Gene3D" id="2.60.34.10">
    <property type="entry name" value="Substrate Binding Domain Of DNAk, Chain A, domain 1"/>
    <property type="match status" value="1"/>
</dbReference>
<dbReference type="HAMAP" id="MF_00679">
    <property type="entry name" value="HscA"/>
    <property type="match status" value="1"/>
</dbReference>
<dbReference type="InterPro" id="IPR043129">
    <property type="entry name" value="ATPase_NBD"/>
</dbReference>
<dbReference type="InterPro" id="IPR018181">
    <property type="entry name" value="Heat_shock_70_CS"/>
</dbReference>
<dbReference type="InterPro" id="IPR042039">
    <property type="entry name" value="HscA_NBD"/>
</dbReference>
<dbReference type="InterPro" id="IPR029048">
    <property type="entry name" value="HSP70_C_sf"/>
</dbReference>
<dbReference type="InterPro" id="IPR029047">
    <property type="entry name" value="HSP70_peptide-bd_sf"/>
</dbReference>
<dbReference type="InterPro" id="IPR013126">
    <property type="entry name" value="Hsp_70_fam"/>
</dbReference>
<dbReference type="InterPro" id="IPR010236">
    <property type="entry name" value="ISC_FeS_clus_asmbl_HscA"/>
</dbReference>
<dbReference type="NCBIfam" id="TIGR01991">
    <property type="entry name" value="HscA"/>
    <property type="match status" value="1"/>
</dbReference>
<dbReference type="NCBIfam" id="NF003520">
    <property type="entry name" value="PRK05183.1"/>
    <property type="match status" value="1"/>
</dbReference>
<dbReference type="PANTHER" id="PTHR19375">
    <property type="entry name" value="HEAT SHOCK PROTEIN 70KDA"/>
    <property type="match status" value="1"/>
</dbReference>
<dbReference type="Pfam" id="PF00012">
    <property type="entry name" value="HSP70"/>
    <property type="match status" value="1"/>
</dbReference>
<dbReference type="PRINTS" id="PR00301">
    <property type="entry name" value="HEATSHOCK70"/>
</dbReference>
<dbReference type="SUPFAM" id="SSF53067">
    <property type="entry name" value="Actin-like ATPase domain"/>
    <property type="match status" value="2"/>
</dbReference>
<dbReference type="SUPFAM" id="SSF100934">
    <property type="entry name" value="Heat shock protein 70kD (HSP70), C-terminal subdomain"/>
    <property type="match status" value="1"/>
</dbReference>
<dbReference type="SUPFAM" id="SSF100920">
    <property type="entry name" value="Heat shock protein 70kD (HSP70), peptide-binding domain"/>
    <property type="match status" value="1"/>
</dbReference>
<dbReference type="PROSITE" id="PS00297">
    <property type="entry name" value="HSP70_1"/>
    <property type="match status" value="1"/>
</dbReference>
<dbReference type="PROSITE" id="PS00329">
    <property type="entry name" value="HSP70_2"/>
    <property type="match status" value="1"/>
</dbReference>
<dbReference type="PROSITE" id="PS01036">
    <property type="entry name" value="HSP70_3"/>
    <property type="match status" value="1"/>
</dbReference>
<proteinExistence type="inferred from homology"/>
<reference key="1">
    <citation type="journal article" date="2005" name="Nat. Biotechnol.">
        <title>Complete genome sequence of the plant commensal Pseudomonas fluorescens Pf-5.</title>
        <authorList>
            <person name="Paulsen I.T."/>
            <person name="Press C.M."/>
            <person name="Ravel J."/>
            <person name="Kobayashi D.Y."/>
            <person name="Myers G.S.A."/>
            <person name="Mavrodi D.V."/>
            <person name="DeBoy R.T."/>
            <person name="Seshadri R."/>
            <person name="Ren Q."/>
            <person name="Madupu R."/>
            <person name="Dodson R.J."/>
            <person name="Durkin A.S."/>
            <person name="Brinkac L.M."/>
            <person name="Daugherty S.C."/>
            <person name="Sullivan S.A."/>
            <person name="Rosovitz M.J."/>
            <person name="Gwinn M.L."/>
            <person name="Zhou L."/>
            <person name="Schneider D.J."/>
            <person name="Cartinhour S.W."/>
            <person name="Nelson W.C."/>
            <person name="Weidman J."/>
            <person name="Watkins K."/>
            <person name="Tran K."/>
            <person name="Khouri H."/>
            <person name="Pierson E.A."/>
            <person name="Pierson L.S. III"/>
            <person name="Thomashow L.S."/>
            <person name="Loper J.E."/>
        </authorList>
    </citation>
    <scope>NUCLEOTIDE SEQUENCE [LARGE SCALE GENOMIC DNA]</scope>
    <source>
        <strain>ATCC BAA-477 / NRRL B-23932 / Pf-5</strain>
    </source>
</reference>
<organism>
    <name type="scientific">Pseudomonas fluorescens (strain ATCC BAA-477 / NRRL B-23932 / Pf-5)</name>
    <dbReference type="NCBI Taxonomy" id="220664"/>
    <lineage>
        <taxon>Bacteria</taxon>
        <taxon>Pseudomonadati</taxon>
        <taxon>Pseudomonadota</taxon>
        <taxon>Gammaproteobacteria</taxon>
        <taxon>Pseudomonadales</taxon>
        <taxon>Pseudomonadaceae</taxon>
        <taxon>Pseudomonas</taxon>
    </lineage>
</organism>
<sequence length="620" mass="66212">MALLQIAEPGQSPQPHQRRLAVGIDLGTTNSLVAALRSGLSEPLADAQGQVILPSAVRYHADRVEVGESARLAAPTDPLNTVLSVKRLMGRGLSDVKQLGEQLPYRFVEGESHMPFIETIQGPKSPVEVSAEVLKVLRQRAEAALGGELVGAVITVPAYFDDAQRQATKDAAKLAGLNVLRLLNEPTAAAVAYGLDQHAEGVVAIYDLGGGTFDISILRLTGGVFEVLATGGDTALGGDDFDHAIAGWIIEGAGLSADLDPGTQRSLLQAACAAKEALTGAASVEVVYGDWRATLTRDAFDALIEPMVARSLKACRRAVRDSNVELDEVQAVVMVGGSTRVPRVREAVAEMFGRQPLTEIDPDQVVAIGAAIQADTLAGNKREGGELLLLDVIPLSLGLETMGGLMEKVIPRNTTIPVARAQDFTTYKDGQTAMMVHVLQGERELISDCRSLARFELRGIPPMVAGAAKIRVTFQVDADGLLSVSARELGSGVEASIQVKPSYGLTDGEIAKMLKDSFQYAGDDKVARVLREQQVDAQRLIEAVQGALDADGERLLDAEERMVIELQMQELSELMRGTDGYAIEQQTKRLSQVTDAFAARRLDSTVKAALAGRNLNEIEE</sequence>
<feature type="chain" id="PRO_1000044872" description="Chaperone protein HscA homolog">
    <location>
        <begin position="1"/>
        <end position="620"/>
    </location>
</feature>
<comment type="function">
    <text evidence="1">Chaperone involved in the maturation of iron-sulfur cluster-containing proteins. Has a low intrinsic ATPase activity which is markedly stimulated by HscB.</text>
</comment>
<comment type="similarity">
    <text evidence="1">Belongs to the heat shock protein 70 family.</text>
</comment>
<keyword id="KW-0067">ATP-binding</keyword>
<keyword id="KW-0143">Chaperone</keyword>
<keyword id="KW-0547">Nucleotide-binding</keyword>